<feature type="chain" id="PRO_0000090736" description="Phosphatidate cytidylyltransferase">
    <location>
        <begin position="1"/>
        <end position="288"/>
    </location>
</feature>
<feature type="transmembrane region" description="Helical" evidence="2">
    <location>
        <begin position="10"/>
        <end position="30"/>
    </location>
</feature>
<feature type="transmembrane region" description="Helical" evidence="2">
    <location>
        <begin position="52"/>
        <end position="72"/>
    </location>
</feature>
<feature type="transmembrane region" description="Helical" evidence="2">
    <location>
        <begin position="89"/>
        <end position="109"/>
    </location>
</feature>
<feature type="transmembrane region" description="Helical" evidence="2">
    <location>
        <begin position="118"/>
        <end position="138"/>
    </location>
</feature>
<feature type="transmembrane region" description="Helical" evidence="2">
    <location>
        <begin position="152"/>
        <end position="172"/>
    </location>
</feature>
<feature type="transmembrane region" description="Helical" evidence="2">
    <location>
        <begin position="192"/>
        <end position="212"/>
    </location>
</feature>
<feature type="transmembrane region" description="Helical" evidence="2">
    <location>
        <begin position="223"/>
        <end position="243"/>
    </location>
</feature>
<feature type="sequence variant" description="In strain: Eagan.">
    <original>V</original>
    <variation>F</variation>
    <location>
        <position position="16"/>
    </location>
</feature>
<feature type="sequence variant" description="In strain: 33.">
    <original>T</original>
    <variation>A</variation>
    <location>
        <position position="59"/>
    </location>
</feature>
<feature type="sequence variant" description="In strain: Eagan.">
    <original>R</original>
    <variation>H</variation>
    <location>
        <position position="81"/>
    </location>
</feature>
<reference key="1">
    <citation type="journal article" date="1995" name="Science">
        <title>Whole-genome random sequencing and assembly of Haemophilus influenzae Rd.</title>
        <authorList>
            <person name="Fleischmann R.D."/>
            <person name="Adams M.D."/>
            <person name="White O."/>
            <person name="Clayton R.A."/>
            <person name="Kirkness E.F."/>
            <person name="Kerlavage A.R."/>
            <person name="Bult C.J."/>
            <person name="Tomb J.-F."/>
            <person name="Dougherty B.A."/>
            <person name="Merrick J.M."/>
            <person name="McKenney K."/>
            <person name="Sutton G.G."/>
            <person name="FitzHugh W."/>
            <person name="Fields C.A."/>
            <person name="Gocayne J.D."/>
            <person name="Scott J.D."/>
            <person name="Shirley R."/>
            <person name="Liu L.-I."/>
            <person name="Glodek A."/>
            <person name="Kelley J.M."/>
            <person name="Weidman J.F."/>
            <person name="Phillips C.A."/>
            <person name="Spriggs T."/>
            <person name="Hedblom E."/>
            <person name="Cotton M.D."/>
            <person name="Utterback T.R."/>
            <person name="Hanna M.C."/>
            <person name="Nguyen D.T."/>
            <person name="Saudek D.M."/>
            <person name="Brandon R.C."/>
            <person name="Fine L.D."/>
            <person name="Fritchman J.L."/>
            <person name="Fuhrmann J.L."/>
            <person name="Geoghagen N.S.M."/>
            <person name="Gnehm C.L."/>
            <person name="McDonald L.A."/>
            <person name="Small K.V."/>
            <person name="Fraser C.M."/>
            <person name="Smith H.O."/>
            <person name="Venter J.C."/>
        </authorList>
    </citation>
    <scope>NUCLEOTIDE SEQUENCE [LARGE SCALE GENOMIC DNA]</scope>
    <source>
        <strain>ATCC 51907 / DSM 11121 / KW20 / Rd</strain>
    </source>
</reference>
<reference key="2">
    <citation type="submission" date="1997-07" db="EMBL/GenBank/DDBJ databases">
        <authorList>
            <person name="Loosmore S.M."/>
            <person name="Yang Y."/>
            <person name="Coleman D.C."/>
            <person name="Shortreed J.M."/>
            <person name="England D.M."/>
            <person name="Klein M.H."/>
        </authorList>
    </citation>
    <scope>NUCLEOTIDE SEQUENCE [GENOMIC DNA]</scope>
    <source>
        <strain>33</strain>
        <strain>Eagan / Serotype B</strain>
    </source>
</reference>
<evidence type="ECO:0000250" key="1"/>
<evidence type="ECO:0000255" key="2"/>
<evidence type="ECO:0000305" key="3"/>
<keyword id="KW-0997">Cell inner membrane</keyword>
<keyword id="KW-1003">Cell membrane</keyword>
<keyword id="KW-0444">Lipid biosynthesis</keyword>
<keyword id="KW-0443">Lipid metabolism</keyword>
<keyword id="KW-0472">Membrane</keyword>
<keyword id="KW-0548">Nucleotidyltransferase</keyword>
<keyword id="KW-0594">Phospholipid biosynthesis</keyword>
<keyword id="KW-1208">Phospholipid metabolism</keyword>
<keyword id="KW-1185">Reference proteome</keyword>
<keyword id="KW-0808">Transferase</keyword>
<keyword id="KW-0812">Transmembrane</keyword>
<keyword id="KW-1133">Transmembrane helix</keyword>
<protein>
    <recommendedName>
        <fullName>Phosphatidate cytidylyltransferase</fullName>
        <ecNumber>2.7.7.41</ecNumber>
    </recommendedName>
    <alternativeName>
        <fullName>CDP-DAG synthase</fullName>
    </alternativeName>
    <alternativeName>
        <fullName>CDP-DG synthase</fullName>
    </alternativeName>
    <alternativeName>
        <fullName>CDP-diacylglycerol synthase</fullName>
        <shortName>CDS</shortName>
    </alternativeName>
    <alternativeName>
        <fullName>CDP-diglyceride pyrophosphorylase</fullName>
    </alternativeName>
    <alternativeName>
        <fullName>CDP-diglyceride synthase</fullName>
    </alternativeName>
    <alternativeName>
        <fullName>CTP:phosphatidate cytidylyltransferase</fullName>
    </alternativeName>
</protein>
<name>CDSA_HAEIN</name>
<proteinExistence type="inferred from homology"/>
<organism>
    <name type="scientific">Haemophilus influenzae (strain ATCC 51907 / DSM 11121 / KW20 / Rd)</name>
    <dbReference type="NCBI Taxonomy" id="71421"/>
    <lineage>
        <taxon>Bacteria</taxon>
        <taxon>Pseudomonadati</taxon>
        <taxon>Pseudomonadota</taxon>
        <taxon>Gammaproteobacteria</taxon>
        <taxon>Pasteurellales</taxon>
        <taxon>Pasteurellaceae</taxon>
        <taxon>Haemophilus</taxon>
    </lineage>
</organism>
<gene>
    <name type="primary">cdsA</name>
    <name type="synonym">cds</name>
    <name type="ordered locus">HI_0919</name>
</gene>
<sequence length="288" mass="32247">MLKQRVLSAIVLIAAVLCALFLFTPFYFALALGAVAILGIWEWTQFARLKQPLIRFFVTTFLGVFIFLWLYTEGNYLDAGRVFEQHLQLLLINAVSWWGLALLLVISYPKSAKFWSKNPLLQLLFAFSTLIPFVAGVLRLRLEHYTHDPYHGLFLLLYVFILVWAADSGAYFSGRAFGKRKLAPKVSPGKSWEGVIGGLITALVLAFIFIHFSNNTLVGDRNITGFIILSVATVAISVLGDLTESMFKRESGVKDSSQLIPGHGGVLDRIDSLTAAVPFFSYFYFFVL</sequence>
<comment type="catalytic activity">
    <reaction>
        <text>a 1,2-diacyl-sn-glycero-3-phosphate + CTP + H(+) = a CDP-1,2-diacyl-sn-glycerol + diphosphate</text>
        <dbReference type="Rhea" id="RHEA:16229"/>
        <dbReference type="ChEBI" id="CHEBI:15378"/>
        <dbReference type="ChEBI" id="CHEBI:33019"/>
        <dbReference type="ChEBI" id="CHEBI:37563"/>
        <dbReference type="ChEBI" id="CHEBI:58332"/>
        <dbReference type="ChEBI" id="CHEBI:58608"/>
        <dbReference type="EC" id="2.7.7.41"/>
    </reaction>
</comment>
<comment type="pathway">
    <text>Phospholipid metabolism; CDP-diacylglycerol biosynthesis; CDP-diacylglycerol from sn-glycerol 3-phosphate: step 3/3.</text>
</comment>
<comment type="subcellular location">
    <subcellularLocation>
        <location evidence="1">Cell inner membrane</location>
        <topology evidence="1">Multi-pass membrane protein</topology>
    </subcellularLocation>
</comment>
<comment type="similarity">
    <text evidence="3">Belongs to the CDS family.</text>
</comment>
<accession>P44937</accession>
<accession>O32623</accession>
<accession>O32627</accession>
<dbReference type="EC" id="2.7.7.41"/>
<dbReference type="EMBL" id="L42023">
    <property type="protein sequence ID" value="AAC22577.1"/>
    <property type="molecule type" value="Genomic_DNA"/>
</dbReference>
<dbReference type="EMBL" id="U60831">
    <property type="protein sequence ID" value="AAB61967.1"/>
    <property type="molecule type" value="Genomic_DNA"/>
</dbReference>
<dbReference type="EMBL" id="U60832">
    <property type="protein sequence ID" value="AAB61972.1"/>
    <property type="molecule type" value="Genomic_DNA"/>
</dbReference>
<dbReference type="PIR" id="G64102">
    <property type="entry name" value="G64102"/>
</dbReference>
<dbReference type="RefSeq" id="NP_439079.1">
    <property type="nucleotide sequence ID" value="NC_000907.1"/>
</dbReference>
<dbReference type="SMR" id="P44937"/>
<dbReference type="STRING" id="71421.HI_0919"/>
<dbReference type="EnsemblBacteria" id="AAC22577">
    <property type="protein sequence ID" value="AAC22577"/>
    <property type="gene ID" value="HI_0919"/>
</dbReference>
<dbReference type="KEGG" id="hin:HI_0919"/>
<dbReference type="PATRIC" id="fig|71421.8.peg.960"/>
<dbReference type="eggNOG" id="COG0575">
    <property type="taxonomic scope" value="Bacteria"/>
</dbReference>
<dbReference type="HOGENOM" id="CLU_037294_1_2_6"/>
<dbReference type="OrthoDB" id="9799199at2"/>
<dbReference type="PhylomeDB" id="P44937"/>
<dbReference type="BioCyc" id="HINF71421:G1GJ1-958-MONOMER"/>
<dbReference type="UniPathway" id="UPA00557">
    <property type="reaction ID" value="UER00614"/>
</dbReference>
<dbReference type="Proteomes" id="UP000000579">
    <property type="component" value="Chromosome"/>
</dbReference>
<dbReference type="GO" id="GO:0005886">
    <property type="term" value="C:plasma membrane"/>
    <property type="evidence" value="ECO:0000318"/>
    <property type="project" value="GO_Central"/>
</dbReference>
<dbReference type="GO" id="GO:0004605">
    <property type="term" value="F:phosphatidate cytidylyltransferase activity"/>
    <property type="evidence" value="ECO:0000318"/>
    <property type="project" value="GO_Central"/>
</dbReference>
<dbReference type="GO" id="GO:0016024">
    <property type="term" value="P:CDP-diacylglycerol biosynthetic process"/>
    <property type="evidence" value="ECO:0000318"/>
    <property type="project" value="GO_Central"/>
</dbReference>
<dbReference type="InterPro" id="IPR000374">
    <property type="entry name" value="PC_trans"/>
</dbReference>
<dbReference type="PANTHER" id="PTHR46382">
    <property type="entry name" value="PHOSPHATIDATE CYTIDYLYLTRANSFERASE"/>
    <property type="match status" value="1"/>
</dbReference>
<dbReference type="PANTHER" id="PTHR46382:SF1">
    <property type="entry name" value="PHOSPHATIDATE CYTIDYLYLTRANSFERASE"/>
    <property type="match status" value="1"/>
</dbReference>
<dbReference type="Pfam" id="PF01148">
    <property type="entry name" value="CTP_transf_1"/>
    <property type="match status" value="1"/>
</dbReference>
<dbReference type="PROSITE" id="PS01315">
    <property type="entry name" value="CDS"/>
    <property type="match status" value="1"/>
</dbReference>